<sequence length="278" mass="29777">MANYTAADVKKLRELTGAGMMDCKKALDEAEGNVEKAVEALRIKGQKGVAKREGRSAENGAVVSVIADDNASGVLVELKCETDFVAKGEKFQAAANAIAEHVAKTAPADLEALLASEIEPGKTVQAFVDEANANLGEKIVLDRFAAYADGYVSAYMHRTMPDLPPQIGVLVELDKPNAEIAKGVAQHIAAFAPKYLSKEDVPAEVVESERRVAEETTRAEGKPEAALPKIVEGRLNGFFKDATLLGQPYALDNKKSVQKVLDEAGVTLKRFTRIKVGI</sequence>
<evidence type="ECO:0000255" key="1">
    <source>
        <dbReference type="HAMAP-Rule" id="MF_00050"/>
    </source>
</evidence>
<accession>Q82JX8</accession>
<reference key="1">
    <citation type="journal article" date="2001" name="Proc. Natl. Acad. Sci. U.S.A.">
        <title>Genome sequence of an industrial microorganism Streptomyces avermitilis: deducing the ability of producing secondary metabolites.</title>
        <authorList>
            <person name="Omura S."/>
            <person name="Ikeda H."/>
            <person name="Ishikawa J."/>
            <person name="Hanamoto A."/>
            <person name="Takahashi C."/>
            <person name="Shinose M."/>
            <person name="Takahashi Y."/>
            <person name="Horikawa H."/>
            <person name="Nakazawa H."/>
            <person name="Osonoe T."/>
            <person name="Kikuchi H."/>
            <person name="Shiba T."/>
            <person name="Sakaki Y."/>
            <person name="Hattori M."/>
        </authorList>
    </citation>
    <scope>NUCLEOTIDE SEQUENCE [LARGE SCALE GENOMIC DNA]</scope>
    <source>
        <strain>ATCC 31267 / DSM 46492 / JCM 5070 / NBRC 14893 / NCIMB 12804 / NRRL 8165 / MA-4680</strain>
    </source>
</reference>
<reference key="2">
    <citation type="journal article" date="2003" name="Nat. Biotechnol.">
        <title>Complete genome sequence and comparative analysis of the industrial microorganism Streptomyces avermitilis.</title>
        <authorList>
            <person name="Ikeda H."/>
            <person name="Ishikawa J."/>
            <person name="Hanamoto A."/>
            <person name="Shinose M."/>
            <person name="Kikuchi H."/>
            <person name="Shiba T."/>
            <person name="Sakaki Y."/>
            <person name="Hattori M."/>
            <person name="Omura S."/>
        </authorList>
    </citation>
    <scope>NUCLEOTIDE SEQUENCE [LARGE SCALE GENOMIC DNA]</scope>
    <source>
        <strain>ATCC 31267 / DSM 46492 / JCM 5070 / NBRC 14893 / NCIMB 12804 / NRRL 8165 / MA-4680</strain>
    </source>
</reference>
<feature type="chain" id="PRO_0000161205" description="Elongation factor Ts">
    <location>
        <begin position="1"/>
        <end position="278"/>
    </location>
</feature>
<feature type="region of interest" description="Involved in Mg(2+) ion dislocation from EF-Tu" evidence="1">
    <location>
        <begin position="82"/>
        <end position="85"/>
    </location>
</feature>
<proteinExistence type="inferred from homology"/>
<name>EFTS_STRAW</name>
<keyword id="KW-0963">Cytoplasm</keyword>
<keyword id="KW-0251">Elongation factor</keyword>
<keyword id="KW-0648">Protein biosynthesis</keyword>
<keyword id="KW-1185">Reference proteome</keyword>
<organism>
    <name type="scientific">Streptomyces avermitilis (strain ATCC 31267 / DSM 46492 / JCM 5070 / NBRC 14893 / NCIMB 12804 / NRRL 8165 / MA-4680)</name>
    <dbReference type="NCBI Taxonomy" id="227882"/>
    <lineage>
        <taxon>Bacteria</taxon>
        <taxon>Bacillati</taxon>
        <taxon>Actinomycetota</taxon>
        <taxon>Actinomycetes</taxon>
        <taxon>Kitasatosporales</taxon>
        <taxon>Streptomycetaceae</taxon>
        <taxon>Streptomyces</taxon>
    </lineage>
</organism>
<protein>
    <recommendedName>
        <fullName evidence="1">Elongation factor Ts</fullName>
        <shortName evidence="1">EF-Ts</shortName>
    </recommendedName>
</protein>
<comment type="function">
    <text evidence="1">Associates with the EF-Tu.GDP complex and induces the exchange of GDP to GTP. It remains bound to the aminoacyl-tRNA.EF-Tu.GTP complex up to the GTP hydrolysis stage on the ribosome.</text>
</comment>
<comment type="subcellular location">
    <subcellularLocation>
        <location evidence="1">Cytoplasm</location>
    </subcellularLocation>
</comment>
<comment type="similarity">
    <text evidence="1">Belongs to the EF-Ts family.</text>
</comment>
<gene>
    <name evidence="1" type="primary">tsf</name>
    <name type="ordered locus">SAV_2626</name>
</gene>
<dbReference type="EMBL" id="BA000030">
    <property type="protein sequence ID" value="BAC70337.1"/>
    <property type="molecule type" value="Genomic_DNA"/>
</dbReference>
<dbReference type="RefSeq" id="WP_010984062.1">
    <property type="nucleotide sequence ID" value="NZ_JZJK01000071.1"/>
</dbReference>
<dbReference type="SMR" id="Q82JX8"/>
<dbReference type="GeneID" id="41539708"/>
<dbReference type="KEGG" id="sma:SAVERM_2626"/>
<dbReference type="eggNOG" id="COG0264">
    <property type="taxonomic scope" value="Bacteria"/>
</dbReference>
<dbReference type="HOGENOM" id="CLU_047155_0_0_11"/>
<dbReference type="OrthoDB" id="9808348at2"/>
<dbReference type="Proteomes" id="UP000000428">
    <property type="component" value="Chromosome"/>
</dbReference>
<dbReference type="GO" id="GO:0005737">
    <property type="term" value="C:cytoplasm"/>
    <property type="evidence" value="ECO:0007669"/>
    <property type="project" value="UniProtKB-SubCell"/>
</dbReference>
<dbReference type="GO" id="GO:0003746">
    <property type="term" value="F:translation elongation factor activity"/>
    <property type="evidence" value="ECO:0007669"/>
    <property type="project" value="UniProtKB-UniRule"/>
</dbReference>
<dbReference type="CDD" id="cd14275">
    <property type="entry name" value="UBA_EF-Ts"/>
    <property type="match status" value="1"/>
</dbReference>
<dbReference type="FunFam" id="1.10.286.20:FF:000001">
    <property type="entry name" value="Elongation factor Ts"/>
    <property type="match status" value="1"/>
</dbReference>
<dbReference type="FunFam" id="1.10.8.10:FF:000001">
    <property type="entry name" value="Elongation factor Ts"/>
    <property type="match status" value="1"/>
</dbReference>
<dbReference type="Gene3D" id="1.10.286.20">
    <property type="match status" value="1"/>
</dbReference>
<dbReference type="Gene3D" id="1.10.8.10">
    <property type="entry name" value="DNA helicase RuvA subunit, C-terminal domain"/>
    <property type="match status" value="1"/>
</dbReference>
<dbReference type="Gene3D" id="3.30.479.20">
    <property type="entry name" value="Elongation factor Ts, dimerisation domain"/>
    <property type="match status" value="2"/>
</dbReference>
<dbReference type="HAMAP" id="MF_00050">
    <property type="entry name" value="EF_Ts"/>
    <property type="match status" value="1"/>
</dbReference>
<dbReference type="InterPro" id="IPR036402">
    <property type="entry name" value="EF-Ts_dimer_sf"/>
</dbReference>
<dbReference type="InterPro" id="IPR001816">
    <property type="entry name" value="Transl_elong_EFTs/EF1B"/>
</dbReference>
<dbReference type="InterPro" id="IPR014039">
    <property type="entry name" value="Transl_elong_EFTs/EF1B_dimer"/>
</dbReference>
<dbReference type="InterPro" id="IPR018101">
    <property type="entry name" value="Transl_elong_Ts_CS"/>
</dbReference>
<dbReference type="InterPro" id="IPR009060">
    <property type="entry name" value="UBA-like_sf"/>
</dbReference>
<dbReference type="NCBIfam" id="TIGR00116">
    <property type="entry name" value="tsf"/>
    <property type="match status" value="1"/>
</dbReference>
<dbReference type="PANTHER" id="PTHR11741">
    <property type="entry name" value="ELONGATION FACTOR TS"/>
    <property type="match status" value="1"/>
</dbReference>
<dbReference type="PANTHER" id="PTHR11741:SF0">
    <property type="entry name" value="ELONGATION FACTOR TS, MITOCHONDRIAL"/>
    <property type="match status" value="1"/>
</dbReference>
<dbReference type="Pfam" id="PF00889">
    <property type="entry name" value="EF_TS"/>
    <property type="match status" value="1"/>
</dbReference>
<dbReference type="SUPFAM" id="SSF54713">
    <property type="entry name" value="Elongation factor Ts (EF-Ts), dimerisation domain"/>
    <property type="match status" value="2"/>
</dbReference>
<dbReference type="SUPFAM" id="SSF46934">
    <property type="entry name" value="UBA-like"/>
    <property type="match status" value="1"/>
</dbReference>
<dbReference type="PROSITE" id="PS01126">
    <property type="entry name" value="EF_TS_1"/>
    <property type="match status" value="1"/>
</dbReference>
<dbReference type="PROSITE" id="PS01127">
    <property type="entry name" value="EF_TS_2"/>
    <property type="match status" value="1"/>
</dbReference>